<gene>
    <name evidence="1" type="primary">tsaD</name>
    <name type="synonym">gcp</name>
    <name type="ordered locus">SSU98_0169</name>
</gene>
<proteinExistence type="inferred from homology"/>
<feature type="chain" id="PRO_0000303576" description="tRNA N6-adenosine threonylcarbamoyltransferase">
    <location>
        <begin position="1"/>
        <end position="336"/>
    </location>
</feature>
<feature type="binding site" evidence="1">
    <location>
        <position position="115"/>
    </location>
    <ligand>
        <name>Fe cation</name>
        <dbReference type="ChEBI" id="CHEBI:24875"/>
    </ligand>
</feature>
<feature type="binding site" evidence="1">
    <location>
        <position position="119"/>
    </location>
    <ligand>
        <name>Fe cation</name>
        <dbReference type="ChEBI" id="CHEBI:24875"/>
    </ligand>
</feature>
<feature type="binding site" evidence="1">
    <location>
        <begin position="137"/>
        <end position="141"/>
    </location>
    <ligand>
        <name>substrate</name>
    </ligand>
</feature>
<feature type="binding site" evidence="1">
    <location>
        <position position="170"/>
    </location>
    <ligand>
        <name>substrate</name>
    </ligand>
</feature>
<feature type="binding site" evidence="1">
    <location>
        <position position="183"/>
    </location>
    <ligand>
        <name>substrate</name>
    </ligand>
</feature>
<feature type="binding site" evidence="1">
    <location>
        <position position="187"/>
    </location>
    <ligand>
        <name>substrate</name>
    </ligand>
</feature>
<feature type="binding site" evidence="1">
    <location>
        <position position="276"/>
    </location>
    <ligand>
        <name>substrate</name>
    </ligand>
</feature>
<feature type="binding site" evidence="1">
    <location>
        <position position="302"/>
    </location>
    <ligand>
        <name>Fe cation</name>
        <dbReference type="ChEBI" id="CHEBI:24875"/>
    </ligand>
</feature>
<comment type="function">
    <text evidence="1">Required for the formation of a threonylcarbamoyl group on adenosine at position 37 (t(6)A37) in tRNAs that read codons beginning with adenine. Is involved in the transfer of the threonylcarbamoyl moiety of threonylcarbamoyl-AMP (TC-AMP) to the N6 group of A37, together with TsaE and TsaB. TsaD likely plays a direct catalytic role in this reaction.</text>
</comment>
<comment type="catalytic activity">
    <reaction evidence="1">
        <text>L-threonylcarbamoyladenylate + adenosine(37) in tRNA = N(6)-L-threonylcarbamoyladenosine(37) in tRNA + AMP + H(+)</text>
        <dbReference type="Rhea" id="RHEA:37059"/>
        <dbReference type="Rhea" id="RHEA-COMP:10162"/>
        <dbReference type="Rhea" id="RHEA-COMP:10163"/>
        <dbReference type="ChEBI" id="CHEBI:15378"/>
        <dbReference type="ChEBI" id="CHEBI:73682"/>
        <dbReference type="ChEBI" id="CHEBI:74411"/>
        <dbReference type="ChEBI" id="CHEBI:74418"/>
        <dbReference type="ChEBI" id="CHEBI:456215"/>
        <dbReference type="EC" id="2.3.1.234"/>
    </reaction>
</comment>
<comment type="cofactor">
    <cofactor evidence="1">
        <name>Fe(2+)</name>
        <dbReference type="ChEBI" id="CHEBI:29033"/>
    </cofactor>
    <text evidence="1">Binds 1 Fe(2+) ion per subunit.</text>
</comment>
<comment type="subcellular location">
    <subcellularLocation>
        <location evidence="1">Cytoplasm</location>
    </subcellularLocation>
</comment>
<comment type="similarity">
    <text evidence="1">Belongs to the KAE1 / TsaD family.</text>
</comment>
<name>TSAD_STRS2</name>
<accession>A4VYZ0</accession>
<protein>
    <recommendedName>
        <fullName evidence="1">tRNA N6-adenosine threonylcarbamoyltransferase</fullName>
        <ecNumber evidence="1">2.3.1.234</ecNumber>
    </recommendedName>
    <alternativeName>
        <fullName evidence="1">N6-L-threonylcarbamoyladenine synthase</fullName>
        <shortName evidence="1">t(6)A synthase</shortName>
    </alternativeName>
    <alternativeName>
        <fullName evidence="1">t(6)A37 threonylcarbamoyladenosine biosynthesis protein TsaD</fullName>
    </alternativeName>
    <alternativeName>
        <fullName evidence="1">tRNA threonylcarbamoyladenosine biosynthesis protein TsaD</fullName>
    </alternativeName>
</protein>
<keyword id="KW-0012">Acyltransferase</keyword>
<keyword id="KW-0963">Cytoplasm</keyword>
<keyword id="KW-0408">Iron</keyword>
<keyword id="KW-0479">Metal-binding</keyword>
<keyword id="KW-0808">Transferase</keyword>
<keyword id="KW-0819">tRNA processing</keyword>
<dbReference type="EC" id="2.3.1.234" evidence="1"/>
<dbReference type="EMBL" id="CP000408">
    <property type="protein sequence ID" value="ABP91329.1"/>
    <property type="molecule type" value="Genomic_DNA"/>
</dbReference>
<dbReference type="SMR" id="A4VYZ0"/>
<dbReference type="KEGG" id="ssv:SSU98_0169"/>
<dbReference type="HOGENOM" id="CLU_023208_0_1_9"/>
<dbReference type="GO" id="GO:0005737">
    <property type="term" value="C:cytoplasm"/>
    <property type="evidence" value="ECO:0007669"/>
    <property type="project" value="UniProtKB-SubCell"/>
</dbReference>
<dbReference type="GO" id="GO:0005506">
    <property type="term" value="F:iron ion binding"/>
    <property type="evidence" value="ECO:0007669"/>
    <property type="project" value="UniProtKB-UniRule"/>
</dbReference>
<dbReference type="GO" id="GO:0061711">
    <property type="term" value="F:N(6)-L-threonylcarbamoyladenine synthase activity"/>
    <property type="evidence" value="ECO:0007669"/>
    <property type="project" value="UniProtKB-EC"/>
</dbReference>
<dbReference type="GO" id="GO:0002949">
    <property type="term" value="P:tRNA threonylcarbamoyladenosine modification"/>
    <property type="evidence" value="ECO:0007669"/>
    <property type="project" value="UniProtKB-UniRule"/>
</dbReference>
<dbReference type="CDD" id="cd24133">
    <property type="entry name" value="ASKHA_NBD_TsaD_bac"/>
    <property type="match status" value="1"/>
</dbReference>
<dbReference type="FunFam" id="3.30.420.40:FF:000012">
    <property type="entry name" value="tRNA N6-adenosine threonylcarbamoyltransferase"/>
    <property type="match status" value="1"/>
</dbReference>
<dbReference type="FunFam" id="3.30.420.40:FF:000040">
    <property type="entry name" value="tRNA N6-adenosine threonylcarbamoyltransferase"/>
    <property type="match status" value="1"/>
</dbReference>
<dbReference type="Gene3D" id="3.30.420.40">
    <property type="match status" value="2"/>
</dbReference>
<dbReference type="HAMAP" id="MF_01445">
    <property type="entry name" value="TsaD"/>
    <property type="match status" value="1"/>
</dbReference>
<dbReference type="InterPro" id="IPR043129">
    <property type="entry name" value="ATPase_NBD"/>
</dbReference>
<dbReference type="InterPro" id="IPR000905">
    <property type="entry name" value="Gcp-like_dom"/>
</dbReference>
<dbReference type="InterPro" id="IPR017861">
    <property type="entry name" value="KAE1/TsaD"/>
</dbReference>
<dbReference type="InterPro" id="IPR022450">
    <property type="entry name" value="TsaD"/>
</dbReference>
<dbReference type="NCBIfam" id="TIGR00329">
    <property type="entry name" value="gcp_kae1"/>
    <property type="match status" value="1"/>
</dbReference>
<dbReference type="NCBIfam" id="TIGR03723">
    <property type="entry name" value="T6A_TsaD_YgjD"/>
    <property type="match status" value="1"/>
</dbReference>
<dbReference type="PANTHER" id="PTHR11735">
    <property type="entry name" value="TRNA N6-ADENOSINE THREONYLCARBAMOYLTRANSFERASE"/>
    <property type="match status" value="1"/>
</dbReference>
<dbReference type="PANTHER" id="PTHR11735:SF6">
    <property type="entry name" value="TRNA N6-ADENOSINE THREONYLCARBAMOYLTRANSFERASE, MITOCHONDRIAL"/>
    <property type="match status" value="1"/>
</dbReference>
<dbReference type="Pfam" id="PF00814">
    <property type="entry name" value="TsaD"/>
    <property type="match status" value="1"/>
</dbReference>
<dbReference type="PRINTS" id="PR00789">
    <property type="entry name" value="OSIALOPTASE"/>
</dbReference>
<dbReference type="SUPFAM" id="SSF53067">
    <property type="entry name" value="Actin-like ATPase domain"/>
    <property type="match status" value="1"/>
</dbReference>
<organism>
    <name type="scientific">Streptococcus suis (strain 98HAH33)</name>
    <dbReference type="NCBI Taxonomy" id="391296"/>
    <lineage>
        <taxon>Bacteria</taxon>
        <taxon>Bacillati</taxon>
        <taxon>Bacillota</taxon>
        <taxon>Bacilli</taxon>
        <taxon>Lactobacillales</taxon>
        <taxon>Streptococcaceae</taxon>
        <taxon>Streptococcus</taxon>
    </lineage>
</organism>
<sequence>MMKDRLILAIETSCDETSVAVLRNDAELLSNVIASQIASHQRFGGVVPEVASRHHVEVITACIEEALLEAEVTAEDLTAVAVTYGPGLVGALLVGISAAKAFAWANGLPLIPVNHMAGHLMAARAVKELEFPLLALLVSGGHTELVYVSEAGDYKIVGETRDDAVGEAYDKVGRVMGLPYPAGRVIDELAHEGQDIYDFPRAMIKEDNLEFSFSGLKSAFINLYHNAQQKGETLSNADLSASFQACVMDILMAKTKKALEQYPVKTLVVAGGVAANQGLRERLAAEITDVEVIIPPLRLCGDNAGMIALAAVSEYNKENLAGWDLNAKPSLAFENL</sequence>
<evidence type="ECO:0000255" key="1">
    <source>
        <dbReference type="HAMAP-Rule" id="MF_01445"/>
    </source>
</evidence>
<reference key="1">
    <citation type="journal article" date="2007" name="PLoS ONE">
        <title>A glimpse of streptococcal toxic shock syndrome from comparative genomics of S. suis 2 Chinese isolates.</title>
        <authorList>
            <person name="Chen C."/>
            <person name="Tang J."/>
            <person name="Dong W."/>
            <person name="Wang C."/>
            <person name="Feng Y."/>
            <person name="Wang J."/>
            <person name="Zheng F."/>
            <person name="Pan X."/>
            <person name="Liu D."/>
            <person name="Li M."/>
            <person name="Song Y."/>
            <person name="Zhu X."/>
            <person name="Sun H."/>
            <person name="Feng T."/>
            <person name="Guo Z."/>
            <person name="Ju A."/>
            <person name="Ge J."/>
            <person name="Dong Y."/>
            <person name="Sun W."/>
            <person name="Jiang Y."/>
            <person name="Wang J."/>
            <person name="Yan J."/>
            <person name="Yang H."/>
            <person name="Wang X."/>
            <person name="Gao G.F."/>
            <person name="Yang R."/>
            <person name="Wang J."/>
            <person name="Yu J."/>
        </authorList>
    </citation>
    <scope>NUCLEOTIDE SEQUENCE [LARGE SCALE GENOMIC DNA]</scope>
    <source>
        <strain>98HAH33</strain>
    </source>
</reference>